<gene>
    <name evidence="3" type="primary">Cap20</name>
    <name type="ORF">CGCSCA2_v013201</name>
</gene>
<keyword id="KW-0551">Lipid droplet</keyword>
<dbReference type="EMBL" id="QPMT01000066">
    <property type="protein sequence ID" value="KAF4846183.1"/>
    <property type="molecule type" value="Genomic_DNA"/>
</dbReference>
<dbReference type="OrthoDB" id="376826at2759"/>
<dbReference type="Proteomes" id="UP000711996">
    <property type="component" value="Unassembled WGS sequence"/>
</dbReference>
<evidence type="ECO:0000269" key="1">
    <source>
    </source>
</evidence>
<evidence type="ECO:0000269" key="2">
    <source ref="2"/>
</evidence>
<evidence type="ECO:0000303" key="3">
    <source>
    </source>
</evidence>
<evidence type="ECO:0000305" key="4"/>
<protein>
    <recommendedName>
        <fullName evidence="3">Lipid droplet coating protein Cap20</fullName>
    </recommendedName>
</protein>
<proteinExistence type="evidence at protein level"/>
<organism>
    <name type="scientific">Colletotrichum siamense</name>
    <name type="common">Anthracnose fungus</name>
    <dbReference type="NCBI Taxonomy" id="690259"/>
    <lineage>
        <taxon>Eukaryota</taxon>
        <taxon>Fungi</taxon>
        <taxon>Dikarya</taxon>
        <taxon>Ascomycota</taxon>
        <taxon>Pezizomycotina</taxon>
        <taxon>Sordariomycetes</taxon>
        <taxon>Hypocreomycetidae</taxon>
        <taxon>Glomerellales</taxon>
        <taxon>Glomerellaceae</taxon>
        <taxon>Colletotrichum</taxon>
        <taxon>Colletotrichum gloeosporioides species complex</taxon>
    </lineage>
</organism>
<sequence>MAQVNGDLPAVNSATAQHLLDIPVIHDGVVAFRNNPFGKKSIAIGDSAYQTFAAPLLPYLARPWGYLRPYAEKADALGDQTLTKVEERVPVIKKPTEELYAGAKGIIALPIRTGFEAKDHVFKTYAQEKKKVGGENLVTYGKAIVSTTLITTSEIIIWVGDVMHYKKEEAKDVVNEKVNN</sequence>
<comment type="function">
    <text evidence="1">Lipid droplet coating protein that regulates lipid metabolism, appressorial turgor pressure, and virulence (PubMed:36135702). Mature appressoria with high turgor pressure are essential to penetrate the leaf surface (PubMed:36135702).</text>
</comment>
<comment type="subunit">
    <text evidence="1 2">Interacts with class I hydrophobin Hydr1 (PubMed:36135702). Interacts also with the cAMP-dependent protein kinase catalytic subunit PkaC1 (Ref.2).</text>
</comment>
<comment type="subcellular location">
    <subcellularLocation>
        <location evidence="1">Lipid droplet</location>
    </subcellularLocation>
</comment>
<comment type="induction">
    <text evidence="2">Expression is positively regulated by the cAMP-dependent protein kinase catalytic subunit PkaC1.</text>
</comment>
<comment type="disruption phenotype">
    <text evidence="1">Reduces the cellular lipids content in both mycelia and conidia (PubMed:36135702). Decreases the virulence on rubber tree leaves (PubMed:36135702).</text>
</comment>
<comment type="similarity">
    <text evidence="4">Belongs to the perilipin family.</text>
</comment>
<reference key="1">
    <citation type="journal article" date="2021" name="Environ. Microbiol.">
        <title>Telomeres and a repeat-rich chromosome encode effector gene clusters in plant pathogenic Colletotrichum fungi.</title>
        <authorList>
            <person name="Gan P."/>
            <person name="Hiroyama R."/>
            <person name="Tsushima A."/>
            <person name="Masuda S."/>
            <person name="Shibata A."/>
            <person name="Ueno A."/>
            <person name="Kumakura N."/>
            <person name="Narusaka M."/>
            <person name="Hoat T.X."/>
            <person name="Narusaka Y."/>
            <person name="Takano Y."/>
            <person name="Shirasu K."/>
        </authorList>
    </citation>
    <scope>NUCLEOTIDE SEQUENCE [LARGE SCALE GENOMIC DNA]</scope>
    <source>
        <strain>CAD2</strain>
    </source>
</reference>
<reference key="2">
    <citation type="journal article" date="2020" name="Eur. J. Plant Pathol.">
        <title>Screening for proteins interacting with the perilipin-like protein CAP20 by a yeast two-hybrid system and identification of a protein kinase a catalytic subunit as an interacting protein in Colletotrichum siamense.</title>
        <authorList>
            <person name="Wang J."/>
            <person name="Zhao X."/>
            <person name="Liao X."/>
            <person name="He Q."/>
            <person name="Li X."/>
            <person name="Liu W."/>
            <person name="Yang Z."/>
            <person name="Zhang Y."/>
            <person name="Lin C."/>
            <person name="Miao W."/>
        </authorList>
    </citation>
    <scope>INDUCTION</scope>
    <scope>INTERACTION WITH PKAC1</scope>
</reference>
<reference key="3">
    <citation type="journal article" date="2022" name="J. Fungi">
        <title>The Colletotrichum siamense Hydrophobin CsHydr1 Interacts with the Lipid Droplet-Coating Protein CsCap20 and Regulates Lipid Metabolism and Virulence.</title>
        <authorList>
            <person name="Wang N."/>
            <person name="Wang J."/>
            <person name="Lu J."/>
            <person name="Liu Y."/>
            <person name="Xi Y."/>
            <person name="Song M."/>
            <person name="Guan X."/>
            <person name="Li Z."/>
            <person name="Li X."/>
            <person name="Zhang Y."/>
            <person name="Lin C."/>
            <person name="Miao W."/>
        </authorList>
    </citation>
    <scope>FUNCTION</scope>
    <scope>SUBCELLULAR LOCATION</scope>
    <scope>DISRUPTION PHENOTYPE</scope>
    <scope>INTERACTION WITH HYDR1</scope>
    <source>
        <strain>HN08</strain>
    </source>
</reference>
<name>CAP20_COLSI</name>
<accession>A0A9P5BNK0</accession>
<feature type="chain" id="PRO_0000462500" description="Lipid droplet coating protein Cap20">
    <location>
        <begin position="1"/>
        <end position="180"/>
    </location>
</feature>